<protein>
    <recommendedName>
        <fullName evidence="1">Dipeptide and tripeptide permease A</fullName>
    </recommendedName>
</protein>
<accession>Q8ZPM6</accession>
<proteinExistence type="evidence at transcript level"/>
<evidence type="ECO:0000255" key="1">
    <source>
        <dbReference type="HAMAP-Rule" id="MF_01878"/>
    </source>
</evidence>
<evidence type="ECO:0000269" key="2">
    <source>
    </source>
</evidence>
<evidence type="ECO:0000269" key="3">
    <source>
    </source>
</evidence>
<dbReference type="EMBL" id="AE006468">
    <property type="protein sequence ID" value="AAL20374.1"/>
    <property type="molecule type" value="Genomic_DNA"/>
</dbReference>
<dbReference type="RefSeq" id="WP_000100911.1">
    <property type="nucleotide sequence ID" value="NC_003197.2"/>
</dbReference>
<dbReference type="SMR" id="Q8ZPM6"/>
<dbReference type="STRING" id="99287.STM1452"/>
<dbReference type="PaxDb" id="99287-STM1452"/>
<dbReference type="KEGG" id="stm:STM1452"/>
<dbReference type="PATRIC" id="fig|99287.12.peg.1535"/>
<dbReference type="HOGENOM" id="CLU_004790_0_0_6"/>
<dbReference type="OMA" id="QMMGVWF"/>
<dbReference type="PhylomeDB" id="Q8ZPM6"/>
<dbReference type="BioCyc" id="SENT99287:STM1452-MONOMER"/>
<dbReference type="Proteomes" id="UP000001014">
    <property type="component" value="Chromosome"/>
</dbReference>
<dbReference type="GO" id="GO:0005886">
    <property type="term" value="C:plasma membrane"/>
    <property type="evidence" value="ECO:0000318"/>
    <property type="project" value="GO_Central"/>
</dbReference>
<dbReference type="GO" id="GO:0071916">
    <property type="term" value="F:dipeptide transmembrane transporter activity"/>
    <property type="evidence" value="ECO:0000318"/>
    <property type="project" value="GO_Central"/>
</dbReference>
<dbReference type="GO" id="GO:0015333">
    <property type="term" value="F:peptide:proton symporter activity"/>
    <property type="evidence" value="ECO:0000318"/>
    <property type="project" value="GO_Central"/>
</dbReference>
<dbReference type="GO" id="GO:0042937">
    <property type="term" value="F:tripeptide transmembrane transporter activity"/>
    <property type="evidence" value="ECO:0000318"/>
    <property type="project" value="GO_Central"/>
</dbReference>
<dbReference type="GO" id="GO:0035442">
    <property type="term" value="P:dipeptide transmembrane transport"/>
    <property type="evidence" value="ECO:0000318"/>
    <property type="project" value="GO_Central"/>
</dbReference>
<dbReference type="GO" id="GO:0015031">
    <property type="term" value="P:protein transport"/>
    <property type="evidence" value="ECO:0007669"/>
    <property type="project" value="UniProtKB-KW"/>
</dbReference>
<dbReference type="CDD" id="cd17346">
    <property type="entry name" value="MFS_DtpA_like"/>
    <property type="match status" value="1"/>
</dbReference>
<dbReference type="FunFam" id="1.20.1250.20:FF:000017">
    <property type="entry name" value="Dipeptide and tripeptide permease A"/>
    <property type="match status" value="1"/>
</dbReference>
<dbReference type="Gene3D" id="1.20.1250.20">
    <property type="entry name" value="MFS general substrate transporter like domains"/>
    <property type="match status" value="1"/>
</dbReference>
<dbReference type="HAMAP" id="MF_01878">
    <property type="entry name" value="PTR2_DtpA_subfam"/>
    <property type="match status" value="1"/>
</dbReference>
<dbReference type="InterPro" id="IPR023517">
    <property type="entry name" value="AA/pep_transptr_DtpA"/>
</dbReference>
<dbReference type="InterPro" id="IPR005279">
    <property type="entry name" value="Dipep/tripep_permease"/>
</dbReference>
<dbReference type="InterPro" id="IPR020846">
    <property type="entry name" value="MFS_dom"/>
</dbReference>
<dbReference type="InterPro" id="IPR036259">
    <property type="entry name" value="MFS_trans_sf"/>
</dbReference>
<dbReference type="InterPro" id="IPR050171">
    <property type="entry name" value="MFS_Transporters"/>
</dbReference>
<dbReference type="InterPro" id="IPR000109">
    <property type="entry name" value="POT_fam"/>
</dbReference>
<dbReference type="InterPro" id="IPR018456">
    <property type="entry name" value="PTR2_symporter_CS"/>
</dbReference>
<dbReference type="NCBIfam" id="NF007137">
    <property type="entry name" value="PRK09584.1"/>
    <property type="match status" value="1"/>
</dbReference>
<dbReference type="NCBIfam" id="TIGR00924">
    <property type="entry name" value="yjdL_sub1_fam"/>
    <property type="match status" value="1"/>
</dbReference>
<dbReference type="PANTHER" id="PTHR23517:SF15">
    <property type="entry name" value="PROTON-DEPENDENT OLIGOPEPTIDE FAMILY TRANSPORT PROTEIN"/>
    <property type="match status" value="1"/>
</dbReference>
<dbReference type="PANTHER" id="PTHR23517">
    <property type="entry name" value="RESISTANCE PROTEIN MDTM, PUTATIVE-RELATED-RELATED"/>
    <property type="match status" value="1"/>
</dbReference>
<dbReference type="Pfam" id="PF00854">
    <property type="entry name" value="PTR2"/>
    <property type="match status" value="1"/>
</dbReference>
<dbReference type="SUPFAM" id="SSF103473">
    <property type="entry name" value="MFS general substrate transporter"/>
    <property type="match status" value="1"/>
</dbReference>
<dbReference type="PROSITE" id="PS50850">
    <property type="entry name" value="MFS"/>
    <property type="match status" value="1"/>
</dbReference>
<dbReference type="PROSITE" id="PS01022">
    <property type="entry name" value="PTR2_1"/>
    <property type="match status" value="1"/>
</dbReference>
<dbReference type="PROSITE" id="PS01023">
    <property type="entry name" value="PTR2_2"/>
    <property type="match status" value="1"/>
</dbReference>
<keyword id="KW-0997">Cell inner membrane</keyword>
<keyword id="KW-1003">Cell membrane</keyword>
<keyword id="KW-0472">Membrane</keyword>
<keyword id="KW-0571">Peptide transport</keyword>
<keyword id="KW-0653">Protein transport</keyword>
<keyword id="KW-1185">Reference proteome</keyword>
<keyword id="KW-0812">Transmembrane</keyword>
<keyword id="KW-1133">Transmembrane helix</keyword>
<keyword id="KW-0813">Transport</keyword>
<name>DTPA_SALTY</name>
<feature type="chain" id="PRO_0000064327" description="Dipeptide and tripeptide permease A">
    <location>
        <begin position="1"/>
        <end position="501"/>
    </location>
</feature>
<feature type="topological domain" description="Cytoplasmic" evidence="1">
    <location>
        <begin position="1"/>
        <end position="21"/>
    </location>
</feature>
<feature type="transmembrane region" description="Helical" evidence="1">
    <location>
        <begin position="22"/>
        <end position="44"/>
    </location>
</feature>
<feature type="topological domain" description="Periplasmic" evidence="1">
    <location>
        <begin position="45"/>
        <end position="59"/>
    </location>
</feature>
<feature type="transmembrane region" description="Helical" evidence="1">
    <location>
        <begin position="60"/>
        <end position="80"/>
    </location>
</feature>
<feature type="topological domain" description="Cytoplasmic" evidence="1">
    <location>
        <begin position="81"/>
        <end position="89"/>
    </location>
</feature>
<feature type="transmembrane region" description="Helical" evidence="1">
    <location>
        <begin position="90"/>
        <end position="110"/>
    </location>
</feature>
<feature type="topological domain" description="Periplasmic" evidence="1">
    <location>
        <position position="111"/>
    </location>
</feature>
<feature type="transmembrane region" description="Helical" evidence="1">
    <location>
        <begin position="112"/>
        <end position="132"/>
    </location>
</feature>
<feature type="topological domain" description="Cytoplasmic" evidence="1">
    <location>
        <begin position="133"/>
        <end position="153"/>
    </location>
</feature>
<feature type="transmembrane region" description="Helical" evidence="1">
    <location>
        <begin position="154"/>
        <end position="174"/>
    </location>
</feature>
<feature type="topological domain" description="Periplasmic" evidence="1">
    <location>
        <begin position="175"/>
        <end position="178"/>
    </location>
</feature>
<feature type="transmembrane region" description="Helical" evidence="1">
    <location>
        <begin position="179"/>
        <end position="199"/>
    </location>
</feature>
<feature type="topological domain" description="Cytoplasmic" evidence="1">
    <location>
        <begin position="200"/>
        <end position="219"/>
    </location>
</feature>
<feature type="transmembrane region" description="Helical" evidence="1">
    <location>
        <begin position="220"/>
        <end position="240"/>
    </location>
</feature>
<feature type="topological domain" description="Periplasmic" evidence="1">
    <location>
        <begin position="241"/>
        <end position="246"/>
    </location>
</feature>
<feature type="transmembrane region" description="Helical" evidence="1">
    <location>
        <begin position="247"/>
        <end position="267"/>
    </location>
</feature>
<feature type="topological domain" description="Cytoplasmic" evidence="1">
    <location>
        <begin position="268"/>
        <end position="274"/>
    </location>
</feature>
<feature type="transmembrane region" description="Helical" evidence="1">
    <location>
        <begin position="275"/>
        <end position="295"/>
    </location>
</feature>
<feature type="topological domain" description="Periplasmic" evidence="1">
    <location>
        <begin position="296"/>
        <end position="320"/>
    </location>
</feature>
<feature type="transmembrane region" description="Helical" evidence="1">
    <location>
        <begin position="321"/>
        <end position="341"/>
    </location>
</feature>
<feature type="topological domain" description="Cytoplasmic" evidence="1">
    <location>
        <begin position="342"/>
        <end position="352"/>
    </location>
</feature>
<feature type="transmembrane region" description="Helical" evidence="1">
    <location>
        <begin position="353"/>
        <end position="373"/>
    </location>
</feature>
<feature type="topological domain" description="Periplasmic" evidence="1">
    <location>
        <begin position="374"/>
        <end position="383"/>
    </location>
</feature>
<feature type="transmembrane region" description="Helical" evidence="1">
    <location>
        <begin position="384"/>
        <end position="404"/>
    </location>
</feature>
<feature type="topological domain" description="Cytoplasmic" evidence="1">
    <location>
        <begin position="405"/>
        <end position="414"/>
    </location>
</feature>
<feature type="transmembrane region" description="Helical" evidence="1">
    <location>
        <begin position="415"/>
        <end position="435"/>
    </location>
</feature>
<feature type="topological domain" description="Periplasmic" evidence="1">
    <location>
        <begin position="436"/>
        <end position="459"/>
    </location>
</feature>
<feature type="transmembrane region" description="Helical" evidence="1">
    <location>
        <begin position="460"/>
        <end position="480"/>
    </location>
</feature>
<feature type="topological domain" description="Cytoplasmic" evidence="1">
    <location>
        <begin position="481"/>
        <end position="501"/>
    </location>
</feature>
<comment type="function">
    <text evidence="1 3">Proton-dependent permease that transports di- and tripeptides.</text>
</comment>
<comment type="subcellular location">
    <subcellularLocation>
        <location evidence="1">Cell inner membrane</location>
        <topology evidence="1">Multi-pass membrane protein</topology>
    </subcellularLocation>
</comment>
<comment type="induction">
    <text evidence="2">Transcriptionally activated by the EnvZ/OmpR regulatory system. Strongly stimulated under anaerobic conditions through an OmpR-independent mechanism.</text>
</comment>
<comment type="similarity">
    <text evidence="1">Belongs to the major facilitator superfamily. Proton-dependent oligopeptide transporter (POT/PTR) (TC 2.A.17) family. DtpA subfamily.</text>
</comment>
<gene>
    <name evidence="1" type="primary">dtpA</name>
    <name type="synonym">tppB</name>
    <name type="ordered locus">STM1452</name>
</gene>
<organism>
    <name type="scientific">Salmonella typhimurium (strain LT2 / SGSC1412 / ATCC 700720)</name>
    <dbReference type="NCBI Taxonomy" id="99287"/>
    <lineage>
        <taxon>Bacteria</taxon>
        <taxon>Pseudomonadati</taxon>
        <taxon>Pseudomonadota</taxon>
        <taxon>Gammaproteobacteria</taxon>
        <taxon>Enterobacterales</taxon>
        <taxon>Enterobacteriaceae</taxon>
        <taxon>Salmonella</taxon>
    </lineage>
</organism>
<sequence length="501" mass="54340">MSTANKKPTESVSLNAFKQPKAFYLIFSIELWERFGYYGLQGIMAVYLVKQLGMSEADSITLFSSFSALVYGLVAIGGWLGDKILGTKRVIMLGAVVLAIGYALVAWSGHDAGIVYMGMAAIAVGNGLFKANPSSLLSTCYAKDDPRLDGAFTMYYMSVNIGSFFSMLATPWLAARYGWSTAFALSVVGMLITVVNFAFCQRWVKSYGSKPDFEPINFRNLLLTIVGIVVLIAVATWLLHNQDIARMVLGVIALGIVIIFGKEAFSMHGAARRKMIVAFILMLQAIIFFVLYSQMPTSLNFFAIRNVEHSILGIAFEPEQYQALNPFWIIIGSPILAAIYNRMGDTLPMPMKFAIGMVLCSGAFLILPLGAKFANDAGIVSVNWLIASYGLQSIGELMISGLGLAMVAQLVPQRLMGFIMGSWFLTTAGANIIGGYVANLMAVPSDVTDPLMSLEVYGRVFMQIGIATAVIAVLMLLTAPKLNRMTQDDDTAEKGSKAATV</sequence>
<reference key="1">
    <citation type="journal article" date="2001" name="Nature">
        <title>Complete genome sequence of Salmonella enterica serovar Typhimurium LT2.</title>
        <authorList>
            <person name="McClelland M."/>
            <person name="Sanderson K.E."/>
            <person name="Spieth J."/>
            <person name="Clifton S.W."/>
            <person name="Latreille P."/>
            <person name="Courtney L."/>
            <person name="Porwollik S."/>
            <person name="Ali J."/>
            <person name="Dante M."/>
            <person name="Du F."/>
            <person name="Hou S."/>
            <person name="Layman D."/>
            <person name="Leonard S."/>
            <person name="Nguyen C."/>
            <person name="Scott K."/>
            <person name="Holmes A."/>
            <person name="Grewal N."/>
            <person name="Mulvaney E."/>
            <person name="Ryan E."/>
            <person name="Sun H."/>
            <person name="Florea L."/>
            <person name="Miller W."/>
            <person name="Stoneking T."/>
            <person name="Nhan M."/>
            <person name="Waterston R."/>
            <person name="Wilson R.K."/>
        </authorList>
    </citation>
    <scope>NUCLEOTIDE SEQUENCE [LARGE SCALE GENOMIC DNA]</scope>
    <source>
        <strain>LT2 / SGSC1412 / ATCC 700720</strain>
    </source>
</reference>
<reference key="2">
    <citation type="journal article" date="1984" name="J. Bacteriol.">
        <title>Genetic characterization and molecular cloning of the tripeptide permease (tpp) genes of Salmonella typhimurium.</title>
        <authorList>
            <person name="Gibson M.M."/>
            <person name="Price M."/>
            <person name="Higgins C.F."/>
        </authorList>
    </citation>
    <scope>FUNCTION</scope>
    <source>
        <strain>LT2</strain>
    </source>
</reference>
<reference key="3">
    <citation type="journal article" date="1987" name="Mol. Gen. Genet.">
        <title>OmpR and EnvZ are pleiotropic regulatory proteins: positive regulation of the tripeptide permease (tppB) of Salmonella typhimurium.</title>
        <authorList>
            <person name="Gibson M.M."/>
            <person name="Ellis E.M."/>
            <person name="Graeme-Cook K.A."/>
            <person name="Higgins C.F."/>
        </authorList>
    </citation>
    <scope>INDUCTION</scope>
    <source>
        <strain>LT2</strain>
    </source>
</reference>